<evidence type="ECO:0000250" key="1">
    <source>
        <dbReference type="UniProtKB" id="I6L8L6"/>
    </source>
</evidence>
<evidence type="ECO:0000250" key="2">
    <source>
        <dbReference type="UniProtKB" id="P20474"/>
    </source>
</evidence>
<evidence type="ECO:0000250" key="3">
    <source>
        <dbReference type="UniProtKB" id="P24605"/>
    </source>
</evidence>
<evidence type="ECO:0000269" key="4">
    <source>
    </source>
</evidence>
<evidence type="ECO:0000269" key="5">
    <source>
    </source>
</evidence>
<evidence type="ECO:0000269" key="6">
    <source>
    </source>
</evidence>
<evidence type="ECO:0000269" key="7">
    <source>
    </source>
</evidence>
<evidence type="ECO:0000269" key="8">
    <source>
    </source>
</evidence>
<evidence type="ECO:0000303" key="9">
    <source>
    </source>
</evidence>
<evidence type="ECO:0000303" key="10">
    <source>
    </source>
</evidence>
<evidence type="ECO:0000303" key="11">
    <source>
    </source>
</evidence>
<evidence type="ECO:0000303" key="12">
    <source>
    </source>
</evidence>
<evidence type="ECO:0000305" key="13"/>
<evidence type="ECO:0000305" key="14">
    <source>
    </source>
</evidence>
<evidence type="ECO:0000305" key="15">
    <source>
    </source>
</evidence>
<evidence type="ECO:0000305" key="16">
    <source>
    </source>
</evidence>
<evidence type="ECO:0000312" key="17">
    <source>
        <dbReference type="PDB" id="2OQD"/>
    </source>
</evidence>
<evidence type="ECO:0000312" key="18">
    <source>
        <dbReference type="PDB" id="3JR8"/>
    </source>
</evidence>
<evidence type="ECO:0007744" key="19">
    <source>
        <dbReference type="PDB" id="2OQD"/>
    </source>
</evidence>
<evidence type="ECO:0007744" key="20">
    <source>
        <dbReference type="PDB" id="3JR8"/>
    </source>
</evidence>
<evidence type="ECO:0007829" key="21">
    <source>
        <dbReference type="PDB" id="7RJI"/>
    </source>
</evidence>
<evidence type="ECO:0007829" key="22">
    <source>
        <dbReference type="PDB" id="7RJZ"/>
    </source>
</evidence>
<comment type="function">
    <text evidence="1 4 6 8">Snake venom phospholipase A2 (PLA2) that shows low enzymatic activity even tough it conserves the catalytic residues (PubMed:9619591). Shows a strong myotoxic activity and induces indirect hemolysis, anticoagulant properties, and cytotoxic activities (PubMed:11018293). In vivo, it induces muscle necrosis, accompanied by polymorphonuclear cell infiltration, and edema in the mouse paw (PubMed:11018293, PubMed:1660822). It exerts its function even in the absence of extracellular calcium, indicating it is not a calcium-dependent enzyme (PubMed:20878713). A model of myotoxic mechanism has been proposed: an apo Lys49-PLA2 is activated by the entrance of a hydrophobic molecule (e.g. fatty acid) at the hydrophobic channel of the protein leading to a reorientation of a monomer (By similarity). This reorientation causes a transition between 'inactive' to 'active' states, causing alignment of C-terminal and membrane-docking sites (MDoS) side-by-side and putting the membrane-disruption sites (MDiS) in the same plane, exposed to solvent and in a symmetric position for both monomers (By similarity). The MDoS region stabilizes the toxin on membrane by the interaction of charged residues with phospholipid head groups (By similarity). Subsequently, the MDiS region destabilizes the membrane with penetration of hydrophobic residues (By similarity). This insertion causes a disorganization of the membrane, allowing an uncontrolled influx of ions (i.e. calcium and sodium), and eventually triggering irreversible intracellular alterations and cell death (By similarity).</text>
</comment>
<comment type="subunit">
    <text evidence="6">Homodimer; non-covalently linked (probable alternative/compact dimer conformation).</text>
</comment>
<comment type="subcellular location">
    <subcellularLocation>
        <location evidence="8">Secreted</location>
    </subcellularLocation>
</comment>
<comment type="tissue specificity">
    <text evidence="16">Expressed by the venom gland.</text>
</comment>
<comment type="toxic dose">
    <text evidence="4">LD(50) is 7.0 mg/kg by intraperitoneal injection into mice.</text>
</comment>
<comment type="pharmaceutical">
    <text evidence="7">Has been tested as therapy in mice cutaneous leishmaniasis model. Incorporated in liposomes, it is able to decrease the size of the mice paw injury and induce a marked inhibition for Leishmania amazonensis amastigotes in lymph node and paw tissues. It also induces the production of inflammatory mediators, such as TNF-alpha and nitric oxid (NO), that probably are responsible of the leishmaniasis infection decrease.</text>
</comment>
<comment type="similarity">
    <text evidence="13">Belongs to the phospholipase A2 family. Group II subfamily. D49 sub-subfamily.</text>
</comment>
<comment type="caution">
    <text evidence="14">Shows no or low enzymatic activity even tough it conserves the catalytic residues. This may be due to the distorsion of the calcium binding loop.</text>
</comment>
<accession>P45881</accession>
<accession>Q6EMI4</accession>
<proteinExistence type="evidence at protein level"/>
<organism>
    <name type="scientific">Bothrops jararacussu</name>
    <name type="common">Jararacussu</name>
    <dbReference type="NCBI Taxonomy" id="8726"/>
    <lineage>
        <taxon>Eukaryota</taxon>
        <taxon>Metazoa</taxon>
        <taxon>Chordata</taxon>
        <taxon>Craniata</taxon>
        <taxon>Vertebrata</taxon>
        <taxon>Euteleostomi</taxon>
        <taxon>Lepidosauria</taxon>
        <taxon>Squamata</taxon>
        <taxon>Bifurcata</taxon>
        <taxon>Unidentata</taxon>
        <taxon>Episquamata</taxon>
        <taxon>Toxicofera</taxon>
        <taxon>Serpentes</taxon>
        <taxon>Colubroidea</taxon>
        <taxon>Viperidae</taxon>
        <taxon>Crotalinae</taxon>
        <taxon>Bothrops</taxon>
    </lineage>
</organism>
<feature type="signal peptide" evidence="8">
    <location>
        <begin position="1"/>
        <end position="16"/>
    </location>
</feature>
<feature type="chain" id="PRO_0000022821" description="Basic phospholipase A2 homolog bothropstoxin-II">
    <location>
        <begin position="17"/>
        <end position="138"/>
    </location>
</feature>
<feature type="region of interest" description="Important for membrane-damaging activities in eukaryotes and bacteria; heparin-binding" evidence="3">
    <location>
        <begin position="121"/>
        <end position="133"/>
    </location>
</feature>
<feature type="site" description="Putative hydrophobic membrane-disrupting site (MDiS)" evidence="2">
    <location>
        <position position="19"/>
    </location>
</feature>
<feature type="site" description="Putative hydrophobic membrane-disrupting site (MDiS)" evidence="2">
    <location>
        <position position="26"/>
    </location>
</feature>
<feature type="site" description="Putative membrane-disrupting site (MDiS)" evidence="2">
    <location>
        <position position="31"/>
    </location>
</feature>
<feature type="site" description="Putative hydrophobic membrane-disrupting site (MDiS)" evidence="2">
    <location>
        <position position="32"/>
    </location>
</feature>
<feature type="site" description="Putative cationic membrane-docking site (MDoS)" evidence="2">
    <location>
        <position position="79"/>
    </location>
</feature>
<feature type="site" description="Important residue of the cationic membrane-docking site (MDoS)" evidence="1">
    <location>
        <position position="121"/>
    </location>
</feature>
<feature type="site" description="Hydrophobic membrane-disruption site (MDiS)" evidence="1">
    <location>
        <position position="130"/>
    </location>
</feature>
<feature type="site" description="Cationic membrane-docking site (MDoS)" evidence="1">
    <location>
        <position position="133"/>
    </location>
</feature>
<feature type="disulfide bond" evidence="5 6 19 20">
    <location>
        <begin position="42"/>
        <end position="131"/>
    </location>
</feature>
<feature type="disulfide bond" evidence="5 6 19 20">
    <location>
        <begin position="44"/>
        <end position="60"/>
    </location>
</feature>
<feature type="disulfide bond" evidence="5 6 19 20">
    <location>
        <begin position="59"/>
        <end position="111"/>
    </location>
</feature>
<feature type="disulfide bond" evidence="5 6 19 20">
    <location>
        <begin position="65"/>
        <end position="138"/>
    </location>
</feature>
<feature type="disulfide bond" evidence="5 6 19 20">
    <location>
        <begin position="66"/>
        <end position="104"/>
    </location>
</feature>
<feature type="disulfide bond" evidence="5 6 19 20">
    <location>
        <begin position="73"/>
        <end position="97"/>
    </location>
</feature>
<feature type="disulfide bond" evidence="5 6 19 20">
    <location>
        <begin position="91"/>
        <end position="102"/>
    </location>
</feature>
<feature type="sequence conflict" description="In Ref. 3; AA sequence." evidence="13" ref="3">
    <original>F</original>
    <variation>W</variation>
    <location>
        <position position="21"/>
    </location>
</feature>
<feature type="sequence conflict" description="In Ref. 3; AA sequence." evidence="13" ref="3">
    <original>QGQPKDA</original>
    <variation>RGKPVDP</variation>
    <location>
        <begin position="49"/>
        <end position="55"/>
    </location>
</feature>
<feature type="sequence conflict" description="In Ref. 3; AA sequence." evidence="13" ref="3">
    <original>GKLTNCKPKT</original>
    <variation>KVTNYCPKKN</variation>
    <location>
        <begin position="68"/>
        <end position="77"/>
    </location>
</feature>
<feature type="sequence conflict" description="In Ref. 3; AA sequence." evidence="13" ref="3">
    <original>ENGVIICGEGTPCEK</original>
    <variation>VSYNYCRGGPCDE</variation>
    <location>
        <begin position="85"/>
        <end position="99"/>
    </location>
</feature>
<feature type="sequence conflict" description="In Ref. 3; AA sequence." evidence="13" ref="3">
    <original>A</original>
    <variation>I</variation>
    <location>
        <position position="108"/>
    </location>
</feature>
<feature type="sequence conflict" description="In Ref. 3; AA sequence." evidence="13" ref="3">
    <original>R</original>
    <variation>G</variation>
    <location>
        <position position="117"/>
    </location>
</feature>
<feature type="sequence conflict" description="In Ref. 3; AA sequence." evidence="13" ref="3">
    <original>KKRYMAYPDVLCKK</original>
    <variation>NKKAYYHLKPFCKE</variation>
    <location>
        <begin position="120"/>
        <end position="133"/>
    </location>
</feature>
<feature type="sequence conflict" description="In Ref. 3; AA sequence." evidence="13" ref="3">
    <original>K</original>
    <variation>T</variation>
    <location>
        <position position="137"/>
    </location>
</feature>
<feature type="helix" evidence="22">
    <location>
        <begin position="18"/>
        <end position="29"/>
    </location>
</feature>
<feature type="helix" evidence="22">
    <location>
        <begin position="33"/>
        <end position="36"/>
    </location>
</feature>
<feature type="turn" evidence="22">
    <location>
        <begin position="37"/>
        <end position="39"/>
    </location>
</feature>
<feature type="turn" evidence="22">
    <location>
        <begin position="41"/>
        <end position="43"/>
    </location>
</feature>
<feature type="helix" evidence="22">
    <location>
        <begin position="44"/>
        <end position="46"/>
    </location>
</feature>
<feature type="helix" evidence="22">
    <location>
        <begin position="55"/>
        <end position="68"/>
    </location>
</feature>
<feature type="turn" evidence="22">
    <location>
        <begin position="75"/>
        <end position="77"/>
    </location>
</feature>
<feature type="strand" evidence="21">
    <location>
        <begin position="82"/>
        <end position="85"/>
    </location>
</feature>
<feature type="strand" evidence="21">
    <location>
        <begin position="88"/>
        <end position="91"/>
    </location>
</feature>
<feature type="helix" evidence="22">
    <location>
        <begin position="96"/>
        <end position="114"/>
    </location>
</feature>
<feature type="helix" evidence="22">
    <location>
        <begin position="116"/>
        <end position="118"/>
    </location>
</feature>
<feature type="helix" evidence="22">
    <location>
        <begin position="121"/>
        <end position="123"/>
    </location>
</feature>
<feature type="helix" evidence="22">
    <location>
        <begin position="128"/>
        <end position="130"/>
    </location>
</feature>
<reference key="1">
    <citation type="journal article" date="1995" name="J. Mol. Evol.">
        <title>The molecular cloning of a phospholipase A2 from Bothrops jararacussu snake venom: evolution of venom group II phospholipase A2's may imply gene duplications.</title>
        <authorList>
            <person name="Moura da Silva A.M."/>
            <person name="Paine M.J.I."/>
            <person name="Diniz M.R.D."/>
            <person name="Theakston R.D.G."/>
            <person name="Crampton J.M."/>
        </authorList>
    </citation>
    <scope>NUCLEOTIDE SEQUENCE [MRNA]</scope>
    <source>
        <tissue>Venom gland</tissue>
    </source>
</reference>
<reference key="2">
    <citation type="journal article" date="2004" name="Biochimie">
        <title>Analysis of Bothrops jararacussu venomous gland transcriptome focusing on structural and functional aspects: I -- gene expression profile of highly expressed phospholipases A2.</title>
        <authorList>
            <person name="Kashima S."/>
            <person name="Roberto P.G."/>
            <person name="Soares A.M."/>
            <person name="Astolfi-Filho S."/>
            <person name="Pereira J.O."/>
            <person name="Giuliati S."/>
            <person name="Faria M. Jr."/>
            <person name="Xavier M.A.S."/>
            <person name="Fontes M.R.M."/>
            <person name="Giglio J.R."/>
            <person name="Franca S.C."/>
        </authorList>
    </citation>
    <scope>NUCLEOTIDE SEQUENCE [MRNA]</scope>
    <source>
        <tissue>Venom gland</tissue>
    </source>
</reference>
<reference key="3">
    <citation type="journal article" date="1998" name="J. Protein Chem.">
        <title>The amino acid sequence of bothropstoxin-II, an Asp-49 myotoxin from Bothrops jararacussu (Jararacucu) venom with low phospholipase A2 activity.</title>
        <authorList>
            <person name="Pereira M.F."/>
            <person name="Novello J.C."/>
            <person name="Cintra A.C."/>
            <person name="Giglio J.R."/>
            <person name="Landucci E.T."/>
            <person name="Oliveira B."/>
            <person name="Marangoni S."/>
        </authorList>
    </citation>
    <scope>PROTEIN SEQUENCE OF 17-138</scope>
    <scope>FUNCTION</scope>
    <scope>SUBCELLULAR LOCATION</scope>
    <source>
        <tissue>Venom</tissue>
    </source>
</reference>
<reference key="4">
    <citation type="journal article" date="1991" name="Exp. Mol. Pathol.">
        <title>Skeletal muscle degeneration and regeneration after injection of bothropstoxin-II, a phospholipase A2 isolated from the venom of the snake Bothrops jararacussu.</title>
        <authorList>
            <person name="Gutierrez J.M."/>
            <person name="Nunez J."/>
            <person name="Diaz C."/>
            <person name="Cintra A.C."/>
            <person name="Homsi-Brandeburgo M.I."/>
            <person name="Giglio J.R."/>
        </authorList>
    </citation>
    <scope>FUNCTION</scope>
    <scope>BIOASSAY</scope>
</reference>
<reference key="5">
    <citation type="journal article" date="2000" name="Biochimie">
        <title>Myotoxic phospholipases A(2) in bothrops snake venoms: effect of chemical modifications on the enzymatic and pharmacological properties of bothropstoxins from Bothrops jararacussu.</title>
        <authorList>
            <person name="Andriao-Escarso S.H."/>
            <person name="Soares A.M."/>
            <person name="Rodrigues V.M."/>
            <person name="Angulo Y."/>
            <person name="Diaz C."/>
            <person name="Lomonte B."/>
            <person name="Gutierrez J.M."/>
            <person name="Giglio J.R."/>
        </authorList>
    </citation>
    <scope>FUNCTION</scope>
    <scope>BIOASSAY</scope>
    <scope>TOXIC DOSE</scope>
    <source>
        <tissue>Venom</tissue>
    </source>
</reference>
<reference key="6">
    <citation type="journal article" date="2018" name="Int. Immunopharmacol.">
        <title>Asp49-phospholipase A2-loaded liposomes as experimental therapy in cutaneous leishmaniasis model.</title>
        <authorList>
            <person name="de Barros N.B."/>
            <person name="Aragao Macedo S.R."/>
            <person name="Ferreira A.S."/>
            <person name="Tagliari M.P."/>
            <person name="Kayano A.M."/>
            <person name="Nicolete L.D.F."/>
            <person name="Soares A.M."/>
            <person name="Nicolete R."/>
        </authorList>
    </citation>
    <scope>PHARMACEUTICAL</scope>
</reference>
<reference evidence="17" key="7">
    <citation type="journal article" date="2008" name="Biochim. Biophys. Acta">
        <title>Crystal structure of a myotoxic Asp49-phospholipase A2 with low catalytic activity: insights into Ca2+-independent catalytic mechanism.</title>
        <authorList>
            <person name="Correa L.C."/>
            <person name="Marchi-Salvador D.P."/>
            <person name="Cintra A.C."/>
            <person name="Sampaio S.V."/>
            <person name="Soares A.M."/>
            <person name="Fontes M.R."/>
        </authorList>
    </citation>
    <scope>X-RAY CRYSTALLOGRAPHY (2.19 ANGSTROMS) OF 17-138</scope>
    <scope>DISULFIDE BONDS</scope>
    <source>
        <tissue>Venom</tissue>
    </source>
</reference>
<reference evidence="18" key="8">
    <citation type="journal article" date="2011" name="Proteins">
        <title>Structural, functional, and bioinformatics studies reveal a new snake venom homologue phospholipase A(2) class.</title>
        <authorList>
            <person name="dos Santos J.I."/>
            <person name="Cintra-Francischinelli M."/>
            <person name="Borges R.J."/>
            <person name="Fernandes C.A."/>
            <person name="Pizzo P."/>
            <person name="Cintra A.C."/>
            <person name="Braz A.S."/>
            <person name="Soares A.M."/>
            <person name="Fontes M.R."/>
        </authorList>
    </citation>
    <scope>X-RAY CRYSTALLOGRAPHY (2.10 ANGSTROMS) OF 17-138</scope>
    <scope>SUBUNIT</scope>
    <scope>DISULFIDE BONDS</scope>
</reference>
<name>PA2B2_BOTJR</name>
<dbReference type="EMBL" id="X76289">
    <property type="protein sequence ID" value="CAA53921.1"/>
    <property type="molecule type" value="mRNA"/>
</dbReference>
<dbReference type="EMBL" id="AY185201">
    <property type="protein sequence ID" value="AAO27454.1"/>
    <property type="molecule type" value="mRNA"/>
</dbReference>
<dbReference type="PIR" id="I50098">
    <property type="entry name" value="I50098"/>
</dbReference>
<dbReference type="PDB" id="2OQD">
    <property type="method" value="X-ray"/>
    <property type="resolution" value="2.19 A"/>
    <property type="chains" value="A/B=17-138"/>
</dbReference>
<dbReference type="PDB" id="3JR8">
    <property type="method" value="X-ray"/>
    <property type="resolution" value="2.10 A"/>
    <property type="chains" value="A/B=17-138"/>
</dbReference>
<dbReference type="PDB" id="7RJI">
    <property type="method" value="X-ray"/>
    <property type="resolution" value="1.71 A"/>
    <property type="chains" value="A=17-138"/>
</dbReference>
<dbReference type="PDB" id="7RJZ">
    <property type="method" value="X-ray"/>
    <property type="resolution" value="1.70 A"/>
    <property type="chains" value="A/B=17-138"/>
</dbReference>
<dbReference type="PDBsum" id="2OQD"/>
<dbReference type="PDBsum" id="3JR8"/>
<dbReference type="PDBsum" id="7RJI"/>
<dbReference type="PDBsum" id="7RJZ"/>
<dbReference type="SMR" id="P45881"/>
<dbReference type="ABCD" id="P45881">
    <property type="antibodies" value="5 sequenced antibodies"/>
</dbReference>
<dbReference type="BRENDA" id="3.1.1.4">
    <property type="organism ID" value="6809"/>
</dbReference>
<dbReference type="EvolutionaryTrace" id="P45881"/>
<dbReference type="GO" id="GO:0005576">
    <property type="term" value="C:extracellular region"/>
    <property type="evidence" value="ECO:0007669"/>
    <property type="project" value="UniProtKB-SubCell"/>
</dbReference>
<dbReference type="GO" id="GO:0005509">
    <property type="term" value="F:calcium ion binding"/>
    <property type="evidence" value="ECO:0007669"/>
    <property type="project" value="InterPro"/>
</dbReference>
<dbReference type="GO" id="GO:0047498">
    <property type="term" value="F:calcium-dependent phospholipase A2 activity"/>
    <property type="evidence" value="ECO:0007669"/>
    <property type="project" value="TreeGrafter"/>
</dbReference>
<dbReference type="GO" id="GO:0005543">
    <property type="term" value="F:phospholipid binding"/>
    <property type="evidence" value="ECO:0007669"/>
    <property type="project" value="TreeGrafter"/>
</dbReference>
<dbReference type="GO" id="GO:0090729">
    <property type="term" value="F:toxin activity"/>
    <property type="evidence" value="ECO:0007669"/>
    <property type="project" value="UniProtKB-KW"/>
</dbReference>
<dbReference type="GO" id="GO:0050482">
    <property type="term" value="P:arachidonate secretion"/>
    <property type="evidence" value="ECO:0007669"/>
    <property type="project" value="InterPro"/>
</dbReference>
<dbReference type="GO" id="GO:0016042">
    <property type="term" value="P:lipid catabolic process"/>
    <property type="evidence" value="ECO:0007669"/>
    <property type="project" value="InterPro"/>
</dbReference>
<dbReference type="GO" id="GO:0042130">
    <property type="term" value="P:negative regulation of T cell proliferation"/>
    <property type="evidence" value="ECO:0007669"/>
    <property type="project" value="TreeGrafter"/>
</dbReference>
<dbReference type="GO" id="GO:0006644">
    <property type="term" value="P:phospholipid metabolic process"/>
    <property type="evidence" value="ECO:0007669"/>
    <property type="project" value="InterPro"/>
</dbReference>
<dbReference type="CDD" id="cd00125">
    <property type="entry name" value="PLA2c"/>
    <property type="match status" value="1"/>
</dbReference>
<dbReference type="FunFam" id="1.20.90.10:FF:000001">
    <property type="entry name" value="Basic phospholipase A2 homolog"/>
    <property type="match status" value="1"/>
</dbReference>
<dbReference type="Gene3D" id="1.20.90.10">
    <property type="entry name" value="Phospholipase A2 domain"/>
    <property type="match status" value="1"/>
</dbReference>
<dbReference type="InterPro" id="IPR001211">
    <property type="entry name" value="PLipase_A2"/>
</dbReference>
<dbReference type="InterPro" id="IPR033112">
    <property type="entry name" value="PLipase_A2_Asp_AS"/>
</dbReference>
<dbReference type="InterPro" id="IPR016090">
    <property type="entry name" value="PLipase_A2_dom"/>
</dbReference>
<dbReference type="InterPro" id="IPR036444">
    <property type="entry name" value="PLipase_A2_dom_sf"/>
</dbReference>
<dbReference type="InterPro" id="IPR033113">
    <property type="entry name" value="PLipase_A2_His_AS"/>
</dbReference>
<dbReference type="PANTHER" id="PTHR11716">
    <property type="entry name" value="PHOSPHOLIPASE A2 FAMILY MEMBER"/>
    <property type="match status" value="1"/>
</dbReference>
<dbReference type="PANTHER" id="PTHR11716:SF9">
    <property type="entry name" value="PHOSPHOLIPASE A2, MEMBRANE ASSOCIATED"/>
    <property type="match status" value="1"/>
</dbReference>
<dbReference type="Pfam" id="PF00068">
    <property type="entry name" value="Phospholip_A2_1"/>
    <property type="match status" value="1"/>
</dbReference>
<dbReference type="PRINTS" id="PR00389">
    <property type="entry name" value="PHPHLIPASEA2"/>
</dbReference>
<dbReference type="SMART" id="SM00085">
    <property type="entry name" value="PA2c"/>
    <property type="match status" value="1"/>
</dbReference>
<dbReference type="SUPFAM" id="SSF48619">
    <property type="entry name" value="Phospholipase A2, PLA2"/>
    <property type="match status" value="1"/>
</dbReference>
<dbReference type="PROSITE" id="PS00119">
    <property type="entry name" value="PA2_ASP"/>
    <property type="match status" value="1"/>
</dbReference>
<dbReference type="PROSITE" id="PS00118">
    <property type="entry name" value="PA2_HIS"/>
    <property type="match status" value="1"/>
</dbReference>
<keyword id="KW-0002">3D-structure</keyword>
<keyword id="KW-1203">Blood coagulation cascade inhibiting toxin</keyword>
<keyword id="KW-0903">Direct protein sequencing</keyword>
<keyword id="KW-1015">Disulfide bond</keyword>
<keyword id="KW-1199">Hemostasis impairing toxin</keyword>
<keyword id="KW-0959">Myotoxin</keyword>
<keyword id="KW-0582">Pharmaceutical</keyword>
<keyword id="KW-0964">Secreted</keyword>
<keyword id="KW-0732">Signal</keyword>
<keyword id="KW-0800">Toxin</keyword>
<protein>
    <recommendedName>
        <fullName evidence="10 12">Basic phospholipase A2 homolog bothropstoxin-II</fullName>
        <shortName evidence="9">Bothropstoxin II</shortName>
        <shortName evidence="9 10 12">BthTX-II</shortName>
        <shortName>BtxtxII</shortName>
        <shortName>svPLA2 homolog</shortName>
    </recommendedName>
    <alternativeName>
        <fullName evidence="15">BJU-PLA2</fullName>
        <shortName evidence="11">BJUPLA2</shortName>
    </alternativeName>
    <alternativeName>
        <fullName evidence="9">BOJU-II</fullName>
    </alternativeName>
    <alternativeName>
        <fullName>Myotoxic phospholipase A2</fullName>
    </alternativeName>
</protein>
<sequence length="138" mass="15765">MRTLWIMAVLLVGVEGDLWQFGQMILKETGKLPFPYYTTYGCYCGWGGQGQPKDATDRCCFVHDCCYGKLTNCKPKTDRYSYSRENGVIICGEGTPCEKQICECDKAAAVCFRENLRTYKKRYMAYPDVLCKKPAEKC</sequence>